<feature type="chain" id="PRO_1000136530" description="Esterase FrsA">
    <location>
        <begin position="1"/>
        <end position="415"/>
    </location>
</feature>
<proteinExistence type="inferred from homology"/>
<accession>A9R2X3</accession>
<dbReference type="EC" id="3.1.1.1" evidence="1"/>
<dbReference type="EMBL" id="CP000901">
    <property type="protein sequence ID" value="ABX87550.1"/>
    <property type="molecule type" value="Genomic_DNA"/>
</dbReference>
<dbReference type="RefSeq" id="WP_002208703.1">
    <property type="nucleotide sequence ID" value="NZ_CP009935.1"/>
</dbReference>
<dbReference type="SMR" id="A9R2X3"/>
<dbReference type="ESTHER" id="yerpe-y3224">
    <property type="family name" value="Duf_1100-R"/>
</dbReference>
<dbReference type="GeneID" id="57975494"/>
<dbReference type="KEGG" id="ypg:YpAngola_A3303"/>
<dbReference type="GO" id="GO:0106435">
    <property type="term" value="F:carboxylesterase activity"/>
    <property type="evidence" value="ECO:0007669"/>
    <property type="project" value="UniProtKB-EC"/>
</dbReference>
<dbReference type="FunFam" id="3.40.50.1820:FF:000022">
    <property type="entry name" value="Esterase FrsA"/>
    <property type="match status" value="1"/>
</dbReference>
<dbReference type="Gene3D" id="3.40.50.1820">
    <property type="entry name" value="alpha/beta hydrolase"/>
    <property type="match status" value="1"/>
</dbReference>
<dbReference type="HAMAP" id="MF_01063">
    <property type="entry name" value="FrsA"/>
    <property type="match status" value="1"/>
</dbReference>
<dbReference type="InterPro" id="IPR029058">
    <property type="entry name" value="AB_hydrolase_fold"/>
</dbReference>
<dbReference type="InterPro" id="IPR043423">
    <property type="entry name" value="FrsA"/>
</dbReference>
<dbReference type="InterPro" id="IPR010520">
    <property type="entry name" value="FrsA-like"/>
</dbReference>
<dbReference type="InterPro" id="IPR050261">
    <property type="entry name" value="FrsA_esterase"/>
</dbReference>
<dbReference type="NCBIfam" id="NF003460">
    <property type="entry name" value="PRK05077.1"/>
    <property type="match status" value="1"/>
</dbReference>
<dbReference type="PANTHER" id="PTHR22946">
    <property type="entry name" value="DIENELACTONE HYDROLASE DOMAIN-CONTAINING PROTEIN-RELATED"/>
    <property type="match status" value="1"/>
</dbReference>
<dbReference type="PANTHER" id="PTHR22946:SF4">
    <property type="entry name" value="ESTERASE FRSA"/>
    <property type="match status" value="1"/>
</dbReference>
<dbReference type="Pfam" id="PF06500">
    <property type="entry name" value="FrsA-like"/>
    <property type="match status" value="1"/>
</dbReference>
<dbReference type="SUPFAM" id="SSF53474">
    <property type="entry name" value="alpha/beta-Hydrolases"/>
    <property type="match status" value="1"/>
</dbReference>
<evidence type="ECO:0000255" key="1">
    <source>
        <dbReference type="HAMAP-Rule" id="MF_01063"/>
    </source>
</evidence>
<sequence length="415" mass="47007">MAQANLSEILFKPKFKHPETSTLVRRTHCNHVVNIHSALDGDTANHWYRMINRLMWTWRGIDPLEIEEVLSRIACSKAEHSNNELLDTVVGYRNGNWIYEWANQGMMWQQKAMEETDPGSAGQFWLNAANLYSIASYPHLKGDELSEQAEVLSNRAYEEAAKYLPYTLKELTFPISDGGSLSGFLHMPTVGSAPFPTVLMCGGLDTLQSDYHRLFRDYLEPKGIAMLTIDLPSVGASSRWKLTQDTSYLHQQVLQALADVPWVDHQRVSVFGFRFGANVAVRLGYLEPQRVRAVACLGPIVHHLLCNSDSLRKVPDMYMDVMASRLGMADSTDETLNTEMNRYSLKTQGLLGRRCQTPMLAGFWENDPFSPKEEAKLICSSSADGKLLAIPSKPLYENFHRALLQTSEWLEDKMR</sequence>
<keyword id="KW-0378">Hydrolase</keyword>
<keyword id="KW-0719">Serine esterase</keyword>
<gene>
    <name evidence="1" type="primary">frsA</name>
    <name type="ordered locus">YpAngola_A3303</name>
</gene>
<protein>
    <recommendedName>
        <fullName evidence="1">Esterase FrsA</fullName>
        <ecNumber evidence="1">3.1.1.1</ecNumber>
    </recommendedName>
</protein>
<comment type="function">
    <text evidence="1">Catalyzes the hydrolysis of esters.</text>
</comment>
<comment type="catalytic activity">
    <reaction evidence="1">
        <text>a carboxylic ester + H2O = an alcohol + a carboxylate + H(+)</text>
        <dbReference type="Rhea" id="RHEA:21164"/>
        <dbReference type="ChEBI" id="CHEBI:15377"/>
        <dbReference type="ChEBI" id="CHEBI:15378"/>
        <dbReference type="ChEBI" id="CHEBI:29067"/>
        <dbReference type="ChEBI" id="CHEBI:30879"/>
        <dbReference type="ChEBI" id="CHEBI:33308"/>
        <dbReference type="EC" id="3.1.1.1"/>
    </reaction>
</comment>
<comment type="similarity">
    <text evidence="1">Belongs to the FrsA family.</text>
</comment>
<organism>
    <name type="scientific">Yersinia pestis bv. Antiqua (strain Angola)</name>
    <dbReference type="NCBI Taxonomy" id="349746"/>
    <lineage>
        <taxon>Bacteria</taxon>
        <taxon>Pseudomonadati</taxon>
        <taxon>Pseudomonadota</taxon>
        <taxon>Gammaproteobacteria</taxon>
        <taxon>Enterobacterales</taxon>
        <taxon>Yersiniaceae</taxon>
        <taxon>Yersinia</taxon>
    </lineage>
</organism>
<name>FRSA_YERPG</name>
<reference key="1">
    <citation type="journal article" date="2010" name="J. Bacteriol.">
        <title>Genome sequence of the deep-rooted Yersinia pestis strain Angola reveals new insights into the evolution and pangenome of the plague bacterium.</title>
        <authorList>
            <person name="Eppinger M."/>
            <person name="Worsham P.L."/>
            <person name="Nikolich M.P."/>
            <person name="Riley D.R."/>
            <person name="Sebastian Y."/>
            <person name="Mou S."/>
            <person name="Achtman M."/>
            <person name="Lindler L.E."/>
            <person name="Ravel J."/>
        </authorList>
    </citation>
    <scope>NUCLEOTIDE SEQUENCE [LARGE SCALE GENOMIC DNA]</scope>
    <source>
        <strain>Angola</strain>
    </source>
</reference>